<accession>Q9CCM6</accession>
<accession>O32904</accession>
<proteinExistence type="inferred from homology"/>
<comment type="subcellular location">
    <subcellularLocation>
        <location evidence="1">Cell membrane</location>
        <topology evidence="1">Multi-pass membrane protein</topology>
    </subcellularLocation>
</comment>
<comment type="similarity">
    <text evidence="1">Belongs to the UPF0182 family.</text>
</comment>
<comment type="sequence caution" evidence="2">
    <conflict type="erroneous initiation">
        <sequence resource="EMBL-CDS" id="CAB11027"/>
    </conflict>
</comment>
<gene>
    <name type="ordered locus">ML0644</name>
    <name type="ORF">MLCB1779.46</name>
</gene>
<sequence>MGMRPAARMPKLTRRSRTLIMVALGVIVLLLAGPRLVDAYVEWLWFGELGYRSVFSTVLVTRVVVFLVAGLVVGGIVFAGLAVAYRTRPVFVPSHDNDPVARYRAMALSRLRLIGVGIPAAIGLLAGIIAQSYWVRIQLFLHGDNFGIRDPQFGKDLGFYAFELPFYRLVLSYVFVAVFLAFVVNLLAHYIFGGIRLSGRTGALSRLARLQLVSLVGVLVLLKAVAYWLDRYELLSRTRSSKPFTGAGYTDINAVQPAKLILIAIALICAAAVFSAITLRDFRIPAIGLVLLMLSSLIVGTGWPLIVEQLIAKPDAVRKESEYIRRSITATRHAYGLTEDVVTYRNYIGDAPAIAQQIATDHATTSNIRLLDPTIVSPAFTQFQRGKNFYYFPDQLSIDRYLDKKGNLRDYVVAARELNPDRLIDNQRDWINRHTVYTHGNGFIASPANTVRGIANDPNQNGGYPQFLVNVVGNGTVVSEGPARLDQPRVYFGPVISNTSADYAIVGKNGDDREYDYETNTDTKRYTYAGSGGVPIGSWLSRSVFAAKFAERNFLFSSVIGSNSKILFNRDPAQRVEAVAPWLTTDSSVYPAIVNKRLVWIIDGYTTLDNYPYSERTSLSSATADSTEVAFNRLAPDKRVAYIRNSVKATVDAYDGAVTLYQQDEYDPVLKVWMKVFPGTVRPKGDITPELAEHLRYPEDLFKVQRMLLAKYHVNDPGTFFNTSDFWDVPLDPNPTASSYQPPYYIVAKNILKNDRSASYQLTSAMNRFKQDFLAAYISASSDPETYGKITVLTIPGNVNGPKLANNAITTDPAVSQDLGVIGRDNQNRIRWGNLLTLPVAQGGLLYVEPVYASPGVSDAASSYPRLIRVAMMYNDKIGYGPTVGDALTGLFGPGAASAATGIEPTEAVPPKSPAGSSTPPIAVVPSAPDGSVALSAAKAAALQEIQAVIGAAREAQKKGDFVAYGSALQRLDDAITKFNSTK</sequence>
<organism>
    <name type="scientific">Mycobacterium leprae (strain TN)</name>
    <dbReference type="NCBI Taxonomy" id="272631"/>
    <lineage>
        <taxon>Bacteria</taxon>
        <taxon>Bacillati</taxon>
        <taxon>Actinomycetota</taxon>
        <taxon>Actinomycetes</taxon>
        <taxon>Mycobacteriales</taxon>
        <taxon>Mycobacteriaceae</taxon>
        <taxon>Mycobacterium</taxon>
    </lineage>
</organism>
<reference key="1">
    <citation type="journal article" date="2001" name="Nature">
        <title>Massive gene decay in the leprosy bacillus.</title>
        <authorList>
            <person name="Cole S.T."/>
            <person name="Eiglmeier K."/>
            <person name="Parkhill J."/>
            <person name="James K.D."/>
            <person name="Thomson N.R."/>
            <person name="Wheeler P.R."/>
            <person name="Honore N."/>
            <person name="Garnier T."/>
            <person name="Churcher C.M."/>
            <person name="Harris D.E."/>
            <person name="Mungall K.L."/>
            <person name="Basham D."/>
            <person name="Brown D."/>
            <person name="Chillingworth T."/>
            <person name="Connor R."/>
            <person name="Davies R.M."/>
            <person name="Devlin K."/>
            <person name="Duthoy S."/>
            <person name="Feltwell T."/>
            <person name="Fraser A."/>
            <person name="Hamlin N."/>
            <person name="Holroyd S."/>
            <person name="Hornsby T."/>
            <person name="Jagels K."/>
            <person name="Lacroix C."/>
            <person name="Maclean J."/>
            <person name="Moule S."/>
            <person name="Murphy L.D."/>
            <person name="Oliver K."/>
            <person name="Quail M.A."/>
            <person name="Rajandream M.A."/>
            <person name="Rutherford K.M."/>
            <person name="Rutter S."/>
            <person name="Seeger K."/>
            <person name="Simon S."/>
            <person name="Simmonds M."/>
            <person name="Skelton J."/>
            <person name="Squares R."/>
            <person name="Squares S."/>
            <person name="Stevens K."/>
            <person name="Taylor K."/>
            <person name="Whitehead S."/>
            <person name="Woodward J.R."/>
            <person name="Barrell B.G."/>
        </authorList>
    </citation>
    <scope>NUCLEOTIDE SEQUENCE [LARGE SCALE GENOMIC DNA]</scope>
    <source>
        <strain>TN</strain>
    </source>
</reference>
<dbReference type="EMBL" id="AL583919">
    <property type="protein sequence ID" value="CAC30153.1"/>
    <property type="molecule type" value="Genomic_DNA"/>
</dbReference>
<dbReference type="EMBL" id="Z98271">
    <property type="protein sequence ID" value="CAB11027.1"/>
    <property type="status" value="ALT_INIT"/>
    <property type="molecule type" value="Genomic_DNA"/>
</dbReference>
<dbReference type="PIR" id="E86989">
    <property type="entry name" value="E86989"/>
</dbReference>
<dbReference type="PIR" id="T45332">
    <property type="entry name" value="T45332"/>
</dbReference>
<dbReference type="RefSeq" id="NP_301532.1">
    <property type="nucleotide sequence ID" value="NC_002677.1"/>
</dbReference>
<dbReference type="RefSeq" id="WP_010907856.1">
    <property type="nucleotide sequence ID" value="NC_002677.1"/>
</dbReference>
<dbReference type="SMR" id="Q9CCM6"/>
<dbReference type="STRING" id="272631.gene:17574466"/>
<dbReference type="KEGG" id="mle:ML0644"/>
<dbReference type="PATRIC" id="fig|272631.5.peg.1135"/>
<dbReference type="Leproma" id="ML0644"/>
<dbReference type="eggNOG" id="COG1615">
    <property type="taxonomic scope" value="Bacteria"/>
</dbReference>
<dbReference type="HOGENOM" id="CLU_007733_1_0_11"/>
<dbReference type="OrthoDB" id="9763654at2"/>
<dbReference type="Proteomes" id="UP000000806">
    <property type="component" value="Chromosome"/>
</dbReference>
<dbReference type="GO" id="GO:0005576">
    <property type="term" value="C:extracellular region"/>
    <property type="evidence" value="ECO:0007669"/>
    <property type="project" value="TreeGrafter"/>
</dbReference>
<dbReference type="GO" id="GO:0005886">
    <property type="term" value="C:plasma membrane"/>
    <property type="evidence" value="ECO:0007669"/>
    <property type="project" value="UniProtKB-SubCell"/>
</dbReference>
<dbReference type="HAMAP" id="MF_01600">
    <property type="entry name" value="UPF0182"/>
    <property type="match status" value="1"/>
</dbReference>
<dbReference type="InterPro" id="IPR005372">
    <property type="entry name" value="UPF0182"/>
</dbReference>
<dbReference type="NCBIfam" id="NF000825">
    <property type="entry name" value="PRK00068.1"/>
    <property type="match status" value="1"/>
</dbReference>
<dbReference type="NCBIfam" id="NF009097">
    <property type="entry name" value="PRK12438.1"/>
    <property type="match status" value="1"/>
</dbReference>
<dbReference type="PANTHER" id="PTHR39344">
    <property type="entry name" value="UPF0182 PROTEIN SLL1060"/>
    <property type="match status" value="1"/>
</dbReference>
<dbReference type="PANTHER" id="PTHR39344:SF1">
    <property type="entry name" value="UPF0182 PROTEIN SLL1060"/>
    <property type="match status" value="1"/>
</dbReference>
<dbReference type="Pfam" id="PF03699">
    <property type="entry name" value="UPF0182"/>
    <property type="match status" value="1"/>
</dbReference>
<protein>
    <recommendedName>
        <fullName evidence="1">UPF0182 protein ML0644</fullName>
    </recommendedName>
</protein>
<name>Y644_MYCLE</name>
<keyword id="KW-1003">Cell membrane</keyword>
<keyword id="KW-0472">Membrane</keyword>
<keyword id="KW-1185">Reference proteome</keyword>
<keyword id="KW-0812">Transmembrane</keyword>
<keyword id="KW-1133">Transmembrane helix</keyword>
<evidence type="ECO:0000255" key="1">
    <source>
        <dbReference type="HAMAP-Rule" id="MF_01600"/>
    </source>
</evidence>
<evidence type="ECO:0000305" key="2"/>
<feature type="chain" id="PRO_0000157725" description="UPF0182 protein ML0644">
    <location>
        <begin position="1"/>
        <end position="983"/>
    </location>
</feature>
<feature type="transmembrane region" description="Helical" evidence="1">
    <location>
        <begin position="20"/>
        <end position="37"/>
    </location>
</feature>
<feature type="transmembrane region" description="Helical" evidence="1">
    <location>
        <begin position="63"/>
        <end position="85"/>
    </location>
</feature>
<feature type="transmembrane region" description="Helical" evidence="1">
    <location>
        <begin position="113"/>
        <end position="135"/>
    </location>
</feature>
<feature type="transmembrane region" description="Helical" evidence="1">
    <location>
        <begin position="169"/>
        <end position="191"/>
    </location>
</feature>
<feature type="transmembrane region" description="Helical" evidence="1">
    <location>
        <begin position="212"/>
        <end position="229"/>
    </location>
</feature>
<feature type="transmembrane region" description="Helical" evidence="1">
    <location>
        <begin position="260"/>
        <end position="277"/>
    </location>
</feature>
<feature type="transmembrane region" description="Helical" evidence="1">
    <location>
        <begin position="284"/>
        <end position="306"/>
    </location>
</feature>